<sequence length="223" mass="24808">MGQKVNPNGIRLGYIRDWRSTWYADSSSYATKLNEDIKVREFLHKKLAAAAVSKIQIERPAQNAKITIHTARPGIVIGKKGEDVEKLRAEVHKLMGIPVQINIEEVRKPEIDAKLVAESVAQQLEKRVMFRRAMKKAMQAAMKSGAKGIKIMVSGRLGGAEIARSEWARDGRVPLQTFRADVDYATAEALTTYGVIGVKVWIYKGEILPGQIAEKKNNKKGAK</sequence>
<gene>
    <name evidence="1" type="primary">rpsC</name>
    <name type="ordered locus">FTN_0245</name>
</gene>
<reference key="1">
    <citation type="journal article" date="2007" name="Genome Biol.">
        <title>Comparison of Francisella tularensis genomes reveals evolutionary events associated with the emergence of human pathogenic strains.</title>
        <authorList>
            <person name="Rohmer L."/>
            <person name="Fong C."/>
            <person name="Abmayr S."/>
            <person name="Wasnick M."/>
            <person name="Larson Freeman T.J."/>
            <person name="Radey M."/>
            <person name="Guina T."/>
            <person name="Svensson K."/>
            <person name="Hayden H.S."/>
            <person name="Jacobs M."/>
            <person name="Gallagher L.A."/>
            <person name="Manoil C."/>
            <person name="Ernst R.K."/>
            <person name="Drees B."/>
            <person name="Buckley D."/>
            <person name="Haugen E."/>
            <person name="Bovee D."/>
            <person name="Zhou Y."/>
            <person name="Chang J."/>
            <person name="Levy R."/>
            <person name="Lim R."/>
            <person name="Gillett W."/>
            <person name="Guenthener D."/>
            <person name="Kang A."/>
            <person name="Shaffer S.A."/>
            <person name="Taylor G."/>
            <person name="Chen J."/>
            <person name="Gallis B."/>
            <person name="D'Argenio D.A."/>
            <person name="Forsman M."/>
            <person name="Olson M.V."/>
            <person name="Goodlett D.R."/>
            <person name="Kaul R."/>
            <person name="Miller S.I."/>
            <person name="Brittnacher M.J."/>
        </authorList>
    </citation>
    <scope>NUCLEOTIDE SEQUENCE [LARGE SCALE GENOMIC DNA]</scope>
    <source>
        <strain>U112</strain>
    </source>
</reference>
<keyword id="KW-0687">Ribonucleoprotein</keyword>
<keyword id="KW-0689">Ribosomal protein</keyword>
<keyword id="KW-0694">RNA-binding</keyword>
<keyword id="KW-0699">rRNA-binding</keyword>
<comment type="function">
    <text evidence="1">Binds the lower part of the 30S subunit head. Binds mRNA in the 70S ribosome, positioning it for translation.</text>
</comment>
<comment type="subunit">
    <text evidence="1">Part of the 30S ribosomal subunit. Forms a tight complex with proteins S10 and S14.</text>
</comment>
<comment type="similarity">
    <text evidence="1">Belongs to the universal ribosomal protein uS3 family.</text>
</comment>
<evidence type="ECO:0000255" key="1">
    <source>
        <dbReference type="HAMAP-Rule" id="MF_01309"/>
    </source>
</evidence>
<evidence type="ECO:0000305" key="2"/>
<organism>
    <name type="scientific">Francisella tularensis subsp. novicida (strain U112)</name>
    <dbReference type="NCBI Taxonomy" id="401614"/>
    <lineage>
        <taxon>Bacteria</taxon>
        <taxon>Pseudomonadati</taxon>
        <taxon>Pseudomonadota</taxon>
        <taxon>Gammaproteobacteria</taxon>
        <taxon>Thiotrichales</taxon>
        <taxon>Francisellaceae</taxon>
        <taxon>Francisella</taxon>
    </lineage>
</organism>
<feature type="chain" id="PRO_0000293791" description="Small ribosomal subunit protein uS3">
    <location>
        <begin position="1"/>
        <end position="223"/>
    </location>
</feature>
<feature type="domain" description="KH type-2" evidence="1">
    <location>
        <begin position="39"/>
        <end position="107"/>
    </location>
</feature>
<name>RS3_FRATN</name>
<proteinExistence type="inferred from homology"/>
<dbReference type="EMBL" id="CP000439">
    <property type="protein sequence ID" value="ABK89154.1"/>
    <property type="molecule type" value="Genomic_DNA"/>
</dbReference>
<dbReference type="RefSeq" id="WP_011733588.1">
    <property type="nucleotide sequence ID" value="NZ_CP009633.1"/>
</dbReference>
<dbReference type="SMR" id="A0Q4I9"/>
<dbReference type="GeneID" id="75264255"/>
<dbReference type="KEGG" id="ftn:FTN_0245"/>
<dbReference type="KEGG" id="ftx:AW25_1797"/>
<dbReference type="BioCyc" id="FTUL401614:G1G75-256-MONOMER"/>
<dbReference type="Proteomes" id="UP000000762">
    <property type="component" value="Chromosome"/>
</dbReference>
<dbReference type="GO" id="GO:0022627">
    <property type="term" value="C:cytosolic small ribosomal subunit"/>
    <property type="evidence" value="ECO:0007669"/>
    <property type="project" value="TreeGrafter"/>
</dbReference>
<dbReference type="GO" id="GO:0003729">
    <property type="term" value="F:mRNA binding"/>
    <property type="evidence" value="ECO:0007669"/>
    <property type="project" value="UniProtKB-UniRule"/>
</dbReference>
<dbReference type="GO" id="GO:0019843">
    <property type="term" value="F:rRNA binding"/>
    <property type="evidence" value="ECO:0007669"/>
    <property type="project" value="UniProtKB-UniRule"/>
</dbReference>
<dbReference type="GO" id="GO:0003735">
    <property type="term" value="F:structural constituent of ribosome"/>
    <property type="evidence" value="ECO:0007669"/>
    <property type="project" value="InterPro"/>
</dbReference>
<dbReference type="GO" id="GO:0006412">
    <property type="term" value="P:translation"/>
    <property type="evidence" value="ECO:0007669"/>
    <property type="project" value="UniProtKB-UniRule"/>
</dbReference>
<dbReference type="CDD" id="cd02412">
    <property type="entry name" value="KH-II_30S_S3"/>
    <property type="match status" value="1"/>
</dbReference>
<dbReference type="FunFam" id="3.30.1140.32:FF:000001">
    <property type="entry name" value="30S ribosomal protein S3"/>
    <property type="match status" value="1"/>
</dbReference>
<dbReference type="FunFam" id="3.30.300.20:FF:000001">
    <property type="entry name" value="30S ribosomal protein S3"/>
    <property type="match status" value="1"/>
</dbReference>
<dbReference type="Gene3D" id="3.30.300.20">
    <property type="match status" value="1"/>
</dbReference>
<dbReference type="Gene3D" id="3.30.1140.32">
    <property type="entry name" value="Ribosomal protein S3, C-terminal domain"/>
    <property type="match status" value="1"/>
</dbReference>
<dbReference type="HAMAP" id="MF_01309_B">
    <property type="entry name" value="Ribosomal_uS3_B"/>
    <property type="match status" value="1"/>
</dbReference>
<dbReference type="InterPro" id="IPR004087">
    <property type="entry name" value="KH_dom"/>
</dbReference>
<dbReference type="InterPro" id="IPR015946">
    <property type="entry name" value="KH_dom-like_a/b"/>
</dbReference>
<dbReference type="InterPro" id="IPR004044">
    <property type="entry name" value="KH_dom_type_2"/>
</dbReference>
<dbReference type="InterPro" id="IPR009019">
    <property type="entry name" value="KH_sf_prok-type"/>
</dbReference>
<dbReference type="InterPro" id="IPR036419">
    <property type="entry name" value="Ribosomal_S3_C_sf"/>
</dbReference>
<dbReference type="InterPro" id="IPR005704">
    <property type="entry name" value="Ribosomal_uS3_bac-typ"/>
</dbReference>
<dbReference type="InterPro" id="IPR001351">
    <property type="entry name" value="Ribosomal_uS3_C"/>
</dbReference>
<dbReference type="InterPro" id="IPR018280">
    <property type="entry name" value="Ribosomal_uS3_CS"/>
</dbReference>
<dbReference type="NCBIfam" id="TIGR01009">
    <property type="entry name" value="rpsC_bact"/>
    <property type="match status" value="1"/>
</dbReference>
<dbReference type="PANTHER" id="PTHR11760">
    <property type="entry name" value="30S/40S RIBOSOMAL PROTEIN S3"/>
    <property type="match status" value="1"/>
</dbReference>
<dbReference type="PANTHER" id="PTHR11760:SF19">
    <property type="entry name" value="SMALL RIBOSOMAL SUBUNIT PROTEIN US3C"/>
    <property type="match status" value="1"/>
</dbReference>
<dbReference type="Pfam" id="PF07650">
    <property type="entry name" value="KH_2"/>
    <property type="match status" value="1"/>
</dbReference>
<dbReference type="Pfam" id="PF00189">
    <property type="entry name" value="Ribosomal_S3_C"/>
    <property type="match status" value="1"/>
</dbReference>
<dbReference type="SMART" id="SM00322">
    <property type="entry name" value="KH"/>
    <property type="match status" value="1"/>
</dbReference>
<dbReference type="SUPFAM" id="SSF54814">
    <property type="entry name" value="Prokaryotic type KH domain (KH-domain type II)"/>
    <property type="match status" value="1"/>
</dbReference>
<dbReference type="SUPFAM" id="SSF54821">
    <property type="entry name" value="Ribosomal protein S3 C-terminal domain"/>
    <property type="match status" value="1"/>
</dbReference>
<dbReference type="PROSITE" id="PS50823">
    <property type="entry name" value="KH_TYPE_2"/>
    <property type="match status" value="1"/>
</dbReference>
<dbReference type="PROSITE" id="PS00548">
    <property type="entry name" value="RIBOSOMAL_S3"/>
    <property type="match status" value="1"/>
</dbReference>
<protein>
    <recommendedName>
        <fullName evidence="1">Small ribosomal subunit protein uS3</fullName>
    </recommendedName>
    <alternativeName>
        <fullName evidence="2">30S ribosomal protein S3</fullName>
    </alternativeName>
</protein>
<accession>A0Q4I9</accession>